<keyword id="KW-0106">Calcium</keyword>
<keyword id="KW-1003">Cell membrane</keyword>
<keyword id="KW-0963">Cytoplasm</keyword>
<keyword id="KW-0449">Lipoprotein</keyword>
<keyword id="KW-0472">Membrane</keyword>
<keyword id="KW-0479">Metal-binding</keyword>
<keyword id="KW-0519">Myristate</keyword>
<keyword id="KW-0539">Nucleus</keyword>
<keyword id="KW-0597">Phosphoprotein</keyword>
<keyword id="KW-0653">Protein transport</keyword>
<keyword id="KW-1185">Reference proteome</keyword>
<keyword id="KW-0677">Repeat</keyword>
<keyword id="KW-0813">Transport</keyword>
<dbReference type="EMBL" id="AK008392">
    <property type="protein sequence ID" value="BAB25644.1"/>
    <property type="molecule type" value="mRNA"/>
</dbReference>
<dbReference type="EMBL" id="AC122232">
    <property type="status" value="NOT_ANNOTATED_CDS"/>
    <property type="molecule type" value="Genomic_DNA"/>
</dbReference>
<dbReference type="EMBL" id="CH466531">
    <property type="protein sequence ID" value="EDL17277.1"/>
    <property type="molecule type" value="Genomic_DNA"/>
</dbReference>
<dbReference type="EMBL" id="BC119202">
    <property type="protein sequence ID" value="AAI19203.1"/>
    <property type="molecule type" value="mRNA"/>
</dbReference>
<dbReference type="EMBL" id="BC119204">
    <property type="protein sequence ID" value="AAI19205.1"/>
    <property type="molecule type" value="mRNA"/>
</dbReference>
<dbReference type="CCDS" id="CCDS21814.1"/>
<dbReference type="RefSeq" id="NP_081639.1">
    <property type="nucleotide sequence ID" value="NM_027363.1"/>
</dbReference>
<dbReference type="RefSeq" id="XP_011240201.1">
    <property type="nucleotide sequence ID" value="XM_011241899.2"/>
</dbReference>
<dbReference type="SMR" id="Q9D869"/>
<dbReference type="FunCoup" id="Q9D869">
    <property type="interactions" value="316"/>
</dbReference>
<dbReference type="IntAct" id="Q9D869">
    <property type="interactions" value="1"/>
</dbReference>
<dbReference type="STRING" id="10090.ENSMUSP00000033152"/>
<dbReference type="iPTMnet" id="Q9D869"/>
<dbReference type="PhosphoSitePlus" id="Q9D869"/>
<dbReference type="PaxDb" id="10090-ENSMUSP00000033152"/>
<dbReference type="ProteomicsDB" id="281619"/>
<dbReference type="Antibodypedia" id="59031">
    <property type="antibodies" value="89 antibodies from 24 providers"/>
</dbReference>
<dbReference type="Ensembl" id="ENSMUST00000033152.5">
    <property type="protein sequence ID" value="ENSMUSP00000033152.5"/>
    <property type="gene ID" value="ENSMUSG00000030865.5"/>
</dbReference>
<dbReference type="GeneID" id="70261"/>
<dbReference type="KEGG" id="mmu:70261"/>
<dbReference type="UCSC" id="uc009jos.1">
    <property type="organism name" value="mouse"/>
</dbReference>
<dbReference type="AGR" id="MGI:1917511"/>
<dbReference type="CTD" id="63928"/>
<dbReference type="MGI" id="MGI:1917511">
    <property type="gene designation" value="Chp2"/>
</dbReference>
<dbReference type="VEuPathDB" id="HostDB:ENSMUSG00000030865"/>
<dbReference type="eggNOG" id="KOG0034">
    <property type="taxonomic scope" value="Eukaryota"/>
</dbReference>
<dbReference type="GeneTree" id="ENSGT00940000161957"/>
<dbReference type="HOGENOM" id="CLU_061288_10_5_1"/>
<dbReference type="InParanoid" id="Q9D869"/>
<dbReference type="OMA" id="CKISEMF"/>
<dbReference type="OrthoDB" id="191686at2759"/>
<dbReference type="PhylomeDB" id="Q9D869"/>
<dbReference type="TreeFam" id="TF354284"/>
<dbReference type="BioGRID-ORCS" id="70261">
    <property type="hits" value="2 hits in 76 CRISPR screens"/>
</dbReference>
<dbReference type="PRO" id="PR:Q9D869"/>
<dbReference type="Proteomes" id="UP000000589">
    <property type="component" value="Chromosome 7"/>
</dbReference>
<dbReference type="RNAct" id="Q9D869">
    <property type="molecule type" value="protein"/>
</dbReference>
<dbReference type="Bgee" id="ENSMUSG00000030865">
    <property type="expression patterns" value="Expressed in small intestine Peyer's patch and 71 other cell types or tissues"/>
</dbReference>
<dbReference type="GO" id="GO:0005737">
    <property type="term" value="C:cytoplasm"/>
    <property type="evidence" value="ECO:0000250"/>
    <property type="project" value="UniProtKB"/>
</dbReference>
<dbReference type="GO" id="GO:0005829">
    <property type="term" value="C:cytosol"/>
    <property type="evidence" value="ECO:0007669"/>
    <property type="project" value="Ensembl"/>
</dbReference>
<dbReference type="GO" id="GO:0005730">
    <property type="term" value="C:nucleolus"/>
    <property type="evidence" value="ECO:0007669"/>
    <property type="project" value="Ensembl"/>
</dbReference>
<dbReference type="GO" id="GO:0005654">
    <property type="term" value="C:nucleoplasm"/>
    <property type="evidence" value="ECO:0007669"/>
    <property type="project" value="Ensembl"/>
</dbReference>
<dbReference type="GO" id="GO:0005634">
    <property type="term" value="C:nucleus"/>
    <property type="evidence" value="ECO:0000250"/>
    <property type="project" value="UniProtKB"/>
</dbReference>
<dbReference type="GO" id="GO:0005886">
    <property type="term" value="C:plasma membrane"/>
    <property type="evidence" value="ECO:0000250"/>
    <property type="project" value="UniProtKB"/>
</dbReference>
<dbReference type="GO" id="GO:0005509">
    <property type="term" value="F:calcium ion binding"/>
    <property type="evidence" value="ECO:0000250"/>
    <property type="project" value="UniProtKB"/>
</dbReference>
<dbReference type="GO" id="GO:0071277">
    <property type="term" value="P:cellular response to calcium ion"/>
    <property type="evidence" value="ECO:0000250"/>
    <property type="project" value="UniProtKB"/>
</dbReference>
<dbReference type="GO" id="GO:0070886">
    <property type="term" value="P:positive regulation of calcineurin-NFAT signaling cascade"/>
    <property type="evidence" value="ECO:0000250"/>
    <property type="project" value="UniProtKB"/>
</dbReference>
<dbReference type="GO" id="GO:0008284">
    <property type="term" value="P:positive regulation of cell population proliferation"/>
    <property type="evidence" value="ECO:0000250"/>
    <property type="project" value="UniProtKB"/>
</dbReference>
<dbReference type="GO" id="GO:0010922">
    <property type="term" value="P:positive regulation of phosphatase activity"/>
    <property type="evidence" value="ECO:0000250"/>
    <property type="project" value="UniProtKB"/>
</dbReference>
<dbReference type="GO" id="GO:0042307">
    <property type="term" value="P:positive regulation of protein import into nucleus"/>
    <property type="evidence" value="ECO:0000250"/>
    <property type="project" value="UniProtKB"/>
</dbReference>
<dbReference type="GO" id="GO:0045944">
    <property type="term" value="P:positive regulation of transcription by RNA polymerase II"/>
    <property type="evidence" value="ECO:0000250"/>
    <property type="project" value="UniProtKB"/>
</dbReference>
<dbReference type="GO" id="GO:0015031">
    <property type="term" value="P:protein transport"/>
    <property type="evidence" value="ECO:0007669"/>
    <property type="project" value="UniProtKB-KW"/>
</dbReference>
<dbReference type="GO" id="GO:0006885">
    <property type="term" value="P:regulation of pH"/>
    <property type="evidence" value="ECO:0000266"/>
    <property type="project" value="MGI"/>
</dbReference>
<dbReference type="GO" id="GO:0006814">
    <property type="term" value="P:sodium ion transport"/>
    <property type="evidence" value="ECO:0000266"/>
    <property type="project" value="MGI"/>
</dbReference>
<dbReference type="CDD" id="cd00051">
    <property type="entry name" value="EFh"/>
    <property type="match status" value="1"/>
</dbReference>
<dbReference type="FunFam" id="1.10.238.10:FF:000093">
    <property type="entry name" value="Calcineurin B homologous protein 1"/>
    <property type="match status" value="1"/>
</dbReference>
<dbReference type="Gene3D" id="1.10.238.10">
    <property type="entry name" value="EF-hand"/>
    <property type="match status" value="1"/>
</dbReference>
<dbReference type="InterPro" id="IPR051875">
    <property type="entry name" value="Calcineurin_B_homologous"/>
</dbReference>
<dbReference type="InterPro" id="IPR011992">
    <property type="entry name" value="EF-hand-dom_pair"/>
</dbReference>
<dbReference type="InterPro" id="IPR018247">
    <property type="entry name" value="EF_Hand_1_Ca_BS"/>
</dbReference>
<dbReference type="InterPro" id="IPR002048">
    <property type="entry name" value="EF_hand_dom"/>
</dbReference>
<dbReference type="PANTHER" id="PTHR46002">
    <property type="entry name" value="EG:114D9.1 PROTEIN-RELATED"/>
    <property type="match status" value="1"/>
</dbReference>
<dbReference type="Pfam" id="PF13202">
    <property type="entry name" value="EF-hand_5"/>
    <property type="match status" value="1"/>
</dbReference>
<dbReference type="Pfam" id="PF13499">
    <property type="entry name" value="EF-hand_7"/>
    <property type="match status" value="1"/>
</dbReference>
<dbReference type="SMART" id="SM00054">
    <property type="entry name" value="EFh"/>
    <property type="match status" value="3"/>
</dbReference>
<dbReference type="SUPFAM" id="SSF47473">
    <property type="entry name" value="EF-hand"/>
    <property type="match status" value="1"/>
</dbReference>
<dbReference type="PROSITE" id="PS00018">
    <property type="entry name" value="EF_HAND_1"/>
    <property type="match status" value="2"/>
</dbReference>
<dbReference type="PROSITE" id="PS50222">
    <property type="entry name" value="EF_HAND_2"/>
    <property type="match status" value="3"/>
</dbReference>
<protein>
    <recommendedName>
        <fullName>Calcineurin B homologous protein 2</fullName>
    </recommendedName>
    <alternativeName>
        <fullName>Hepatocellular carcinoma-associated antigen 520 homolog</fullName>
    </alternativeName>
</protein>
<organism>
    <name type="scientific">Mus musculus</name>
    <name type="common">Mouse</name>
    <dbReference type="NCBI Taxonomy" id="10090"/>
    <lineage>
        <taxon>Eukaryota</taxon>
        <taxon>Metazoa</taxon>
        <taxon>Chordata</taxon>
        <taxon>Craniata</taxon>
        <taxon>Vertebrata</taxon>
        <taxon>Euteleostomi</taxon>
        <taxon>Mammalia</taxon>
        <taxon>Eutheria</taxon>
        <taxon>Euarchontoglires</taxon>
        <taxon>Glires</taxon>
        <taxon>Rodentia</taxon>
        <taxon>Myomorpha</taxon>
        <taxon>Muroidea</taxon>
        <taxon>Muridae</taxon>
        <taxon>Murinae</taxon>
        <taxon>Mus</taxon>
        <taxon>Mus</taxon>
    </lineage>
</organism>
<feature type="initiator methionine" description="Removed" evidence="3">
    <location>
        <position position="1"/>
    </location>
</feature>
<feature type="chain" id="PRO_0000073849" description="Calcineurin B homologous protein 2">
    <location>
        <begin position="2"/>
        <end position="196"/>
    </location>
</feature>
<feature type="domain" description="EF-hand 1" evidence="4">
    <location>
        <begin position="26"/>
        <end position="61"/>
    </location>
</feature>
<feature type="domain" description="EF-hand 2" evidence="5">
    <location>
        <begin position="71"/>
        <end position="106"/>
    </location>
</feature>
<feature type="domain" description="EF-hand 3" evidence="4">
    <location>
        <begin position="111"/>
        <end position="146"/>
    </location>
</feature>
<feature type="domain" description="EF-hand 4" evidence="4">
    <location>
        <begin position="152"/>
        <end position="187"/>
    </location>
</feature>
<feature type="short sequence motif" description="Nuclear export signal" evidence="1">
    <location>
        <begin position="137"/>
        <end position="148"/>
    </location>
</feature>
<feature type="binding site" evidence="4">
    <location>
        <position position="124"/>
    </location>
    <ligand>
        <name>Ca(2+)</name>
        <dbReference type="ChEBI" id="CHEBI:29108"/>
        <label>1</label>
    </ligand>
</feature>
<feature type="binding site" evidence="4">
    <location>
        <position position="126"/>
    </location>
    <ligand>
        <name>Ca(2+)</name>
        <dbReference type="ChEBI" id="CHEBI:29108"/>
        <label>1</label>
    </ligand>
</feature>
<feature type="binding site" evidence="4">
    <location>
        <position position="128"/>
    </location>
    <ligand>
        <name>Ca(2+)</name>
        <dbReference type="ChEBI" id="CHEBI:29108"/>
        <label>1</label>
    </ligand>
</feature>
<feature type="binding site" evidence="4">
    <location>
        <position position="130"/>
    </location>
    <ligand>
        <name>Ca(2+)</name>
        <dbReference type="ChEBI" id="CHEBI:29108"/>
        <label>1</label>
    </ligand>
</feature>
<feature type="binding site" evidence="4">
    <location>
        <position position="135"/>
    </location>
    <ligand>
        <name>Ca(2+)</name>
        <dbReference type="ChEBI" id="CHEBI:29108"/>
        <label>1</label>
    </ligand>
</feature>
<feature type="binding site" evidence="4">
    <location>
        <position position="165"/>
    </location>
    <ligand>
        <name>Ca(2+)</name>
        <dbReference type="ChEBI" id="CHEBI:29108"/>
        <label>2</label>
    </ligand>
</feature>
<feature type="binding site" evidence="4">
    <location>
        <position position="167"/>
    </location>
    <ligand>
        <name>Ca(2+)</name>
        <dbReference type="ChEBI" id="CHEBI:29108"/>
        <label>2</label>
    </ligand>
</feature>
<feature type="binding site" evidence="4">
    <location>
        <position position="169"/>
    </location>
    <ligand>
        <name>Ca(2+)</name>
        <dbReference type="ChEBI" id="CHEBI:29108"/>
        <label>2</label>
    </ligand>
</feature>
<feature type="binding site" evidence="4">
    <location>
        <position position="176"/>
    </location>
    <ligand>
        <name>Ca(2+)</name>
        <dbReference type="ChEBI" id="CHEBI:29108"/>
        <label>2</label>
    </ligand>
</feature>
<feature type="modified residue" description="Phosphoserine" evidence="2">
    <location>
        <position position="27"/>
    </location>
</feature>
<feature type="lipid moiety-binding region" description="N-myristoyl glycine" evidence="3">
    <location>
        <position position="2"/>
    </location>
</feature>
<feature type="sequence conflict" description="In Ref. 1; BAB25644." evidence="5" ref="1">
    <original>S</original>
    <variation>G</variation>
    <location>
        <position position="191"/>
    </location>
</feature>
<gene>
    <name type="primary">Chp2</name>
    <name type="synonym">Hca520</name>
</gene>
<accession>Q9D869</accession>
<accession>Q0VEK2</accession>
<comment type="function">
    <text evidence="1">Functions as an integral cofactor in cell pH regulation by controlling plasma membrane-type Na(+)/H(+) exchange activity. Binds to and activates SLC9A1/NHE1 in a serum-independent manner, thus increasing pH and protecting cells from serum deprivation-induced death. Also plays a role in the regulation of cell proliferation and tumor growth by increasing the phosphatase activity of PPP3CA in a calcium-dependent manner. Activator of the calcineurin/NFAT signaling pathway. Involved in the cytoplasmic translocation of the transcription factor NFATC3 to the nucleus (By similarity).</text>
</comment>
<comment type="subunit">
    <text evidence="1">Interacts with PPP3CA. Interacts with SLC9A1/NHE1; the interaction occurs in a calcium-dependent manner. Interacts with SLC9A1/NHE1 (By similarity).</text>
</comment>
<comment type="subcellular location">
    <subcellularLocation>
        <location evidence="1">Cytoplasm</location>
    </subcellularLocation>
    <subcellularLocation>
        <location evidence="1">Nucleus</location>
    </subcellularLocation>
    <subcellularLocation>
        <location evidence="1">Cell membrane</location>
    </subcellularLocation>
    <text evidence="1">Exported from the nucleus to the cytoplasm through a nuclear export signal (NES) pathway. May shuttle between nucleus and cytoplasm. Predominantly localized in a juxtanuclear region. Colocalizes with SLC9A3 in the juxtanuclear region and at the plasma membrane (By similarity).</text>
</comment>
<comment type="similarity">
    <text evidence="5">Belongs to the calcineurin regulatory subunit family. CHP subfamily.</text>
</comment>
<proteinExistence type="evidence at transcript level"/>
<sequence>MGSRSSHIALIPDVEHIRRETGFSQASLLRLYHRFQALDRDEKGFLSRLDLQQIGALAVNPLGDRIIDSFFPNGSQRLYFAGFARVLAYFRPIDEEDATLRDPKQPEPLNSRMNKLRFAFQLYDLDRDGKISRNEMLQVLRLMVGVQVTDEQLESITDRTVQEADEDGDGAVSFLEFTKSLEKMNIEQKMSIRILK</sequence>
<name>CHP2_MOUSE</name>
<evidence type="ECO:0000250" key="1"/>
<evidence type="ECO:0000250" key="2">
    <source>
        <dbReference type="UniProtKB" id="Q810D1"/>
    </source>
</evidence>
<evidence type="ECO:0000255" key="3"/>
<evidence type="ECO:0000255" key="4">
    <source>
        <dbReference type="PROSITE-ProRule" id="PRU00448"/>
    </source>
</evidence>
<evidence type="ECO:0000305" key="5"/>
<reference key="1">
    <citation type="journal article" date="2005" name="Science">
        <title>The transcriptional landscape of the mammalian genome.</title>
        <authorList>
            <person name="Carninci P."/>
            <person name="Kasukawa T."/>
            <person name="Katayama S."/>
            <person name="Gough J."/>
            <person name="Frith M.C."/>
            <person name="Maeda N."/>
            <person name="Oyama R."/>
            <person name="Ravasi T."/>
            <person name="Lenhard B."/>
            <person name="Wells C."/>
            <person name="Kodzius R."/>
            <person name="Shimokawa K."/>
            <person name="Bajic V.B."/>
            <person name="Brenner S.E."/>
            <person name="Batalov S."/>
            <person name="Forrest A.R."/>
            <person name="Zavolan M."/>
            <person name="Davis M.J."/>
            <person name="Wilming L.G."/>
            <person name="Aidinis V."/>
            <person name="Allen J.E."/>
            <person name="Ambesi-Impiombato A."/>
            <person name="Apweiler R."/>
            <person name="Aturaliya R.N."/>
            <person name="Bailey T.L."/>
            <person name="Bansal M."/>
            <person name="Baxter L."/>
            <person name="Beisel K.W."/>
            <person name="Bersano T."/>
            <person name="Bono H."/>
            <person name="Chalk A.M."/>
            <person name="Chiu K.P."/>
            <person name="Choudhary V."/>
            <person name="Christoffels A."/>
            <person name="Clutterbuck D.R."/>
            <person name="Crowe M.L."/>
            <person name="Dalla E."/>
            <person name="Dalrymple B.P."/>
            <person name="de Bono B."/>
            <person name="Della Gatta G."/>
            <person name="di Bernardo D."/>
            <person name="Down T."/>
            <person name="Engstrom P."/>
            <person name="Fagiolini M."/>
            <person name="Faulkner G."/>
            <person name="Fletcher C.F."/>
            <person name="Fukushima T."/>
            <person name="Furuno M."/>
            <person name="Futaki S."/>
            <person name="Gariboldi M."/>
            <person name="Georgii-Hemming P."/>
            <person name="Gingeras T.R."/>
            <person name="Gojobori T."/>
            <person name="Green R.E."/>
            <person name="Gustincich S."/>
            <person name="Harbers M."/>
            <person name="Hayashi Y."/>
            <person name="Hensch T.K."/>
            <person name="Hirokawa N."/>
            <person name="Hill D."/>
            <person name="Huminiecki L."/>
            <person name="Iacono M."/>
            <person name="Ikeo K."/>
            <person name="Iwama A."/>
            <person name="Ishikawa T."/>
            <person name="Jakt M."/>
            <person name="Kanapin A."/>
            <person name="Katoh M."/>
            <person name="Kawasawa Y."/>
            <person name="Kelso J."/>
            <person name="Kitamura H."/>
            <person name="Kitano H."/>
            <person name="Kollias G."/>
            <person name="Krishnan S.P."/>
            <person name="Kruger A."/>
            <person name="Kummerfeld S.K."/>
            <person name="Kurochkin I.V."/>
            <person name="Lareau L.F."/>
            <person name="Lazarevic D."/>
            <person name="Lipovich L."/>
            <person name="Liu J."/>
            <person name="Liuni S."/>
            <person name="McWilliam S."/>
            <person name="Madan Babu M."/>
            <person name="Madera M."/>
            <person name="Marchionni L."/>
            <person name="Matsuda H."/>
            <person name="Matsuzawa S."/>
            <person name="Miki H."/>
            <person name="Mignone F."/>
            <person name="Miyake S."/>
            <person name="Morris K."/>
            <person name="Mottagui-Tabar S."/>
            <person name="Mulder N."/>
            <person name="Nakano N."/>
            <person name="Nakauchi H."/>
            <person name="Ng P."/>
            <person name="Nilsson R."/>
            <person name="Nishiguchi S."/>
            <person name="Nishikawa S."/>
            <person name="Nori F."/>
            <person name="Ohara O."/>
            <person name="Okazaki Y."/>
            <person name="Orlando V."/>
            <person name="Pang K.C."/>
            <person name="Pavan W.J."/>
            <person name="Pavesi G."/>
            <person name="Pesole G."/>
            <person name="Petrovsky N."/>
            <person name="Piazza S."/>
            <person name="Reed J."/>
            <person name="Reid J.F."/>
            <person name="Ring B.Z."/>
            <person name="Ringwald M."/>
            <person name="Rost B."/>
            <person name="Ruan Y."/>
            <person name="Salzberg S.L."/>
            <person name="Sandelin A."/>
            <person name="Schneider C."/>
            <person name="Schoenbach C."/>
            <person name="Sekiguchi K."/>
            <person name="Semple C.A."/>
            <person name="Seno S."/>
            <person name="Sessa L."/>
            <person name="Sheng Y."/>
            <person name="Shibata Y."/>
            <person name="Shimada H."/>
            <person name="Shimada K."/>
            <person name="Silva D."/>
            <person name="Sinclair B."/>
            <person name="Sperling S."/>
            <person name="Stupka E."/>
            <person name="Sugiura K."/>
            <person name="Sultana R."/>
            <person name="Takenaka Y."/>
            <person name="Taki K."/>
            <person name="Tammoja K."/>
            <person name="Tan S.L."/>
            <person name="Tang S."/>
            <person name="Taylor M.S."/>
            <person name="Tegner J."/>
            <person name="Teichmann S.A."/>
            <person name="Ueda H.R."/>
            <person name="van Nimwegen E."/>
            <person name="Verardo R."/>
            <person name="Wei C.L."/>
            <person name="Yagi K."/>
            <person name="Yamanishi H."/>
            <person name="Zabarovsky E."/>
            <person name="Zhu S."/>
            <person name="Zimmer A."/>
            <person name="Hide W."/>
            <person name="Bult C."/>
            <person name="Grimmond S.M."/>
            <person name="Teasdale R.D."/>
            <person name="Liu E.T."/>
            <person name="Brusic V."/>
            <person name="Quackenbush J."/>
            <person name="Wahlestedt C."/>
            <person name="Mattick J.S."/>
            <person name="Hume D.A."/>
            <person name="Kai C."/>
            <person name="Sasaki D."/>
            <person name="Tomaru Y."/>
            <person name="Fukuda S."/>
            <person name="Kanamori-Katayama M."/>
            <person name="Suzuki M."/>
            <person name="Aoki J."/>
            <person name="Arakawa T."/>
            <person name="Iida J."/>
            <person name="Imamura K."/>
            <person name="Itoh M."/>
            <person name="Kato T."/>
            <person name="Kawaji H."/>
            <person name="Kawagashira N."/>
            <person name="Kawashima T."/>
            <person name="Kojima M."/>
            <person name="Kondo S."/>
            <person name="Konno H."/>
            <person name="Nakano K."/>
            <person name="Ninomiya N."/>
            <person name="Nishio T."/>
            <person name="Okada M."/>
            <person name="Plessy C."/>
            <person name="Shibata K."/>
            <person name="Shiraki T."/>
            <person name="Suzuki S."/>
            <person name="Tagami M."/>
            <person name="Waki K."/>
            <person name="Watahiki A."/>
            <person name="Okamura-Oho Y."/>
            <person name="Suzuki H."/>
            <person name="Kawai J."/>
            <person name="Hayashizaki Y."/>
        </authorList>
    </citation>
    <scope>NUCLEOTIDE SEQUENCE [LARGE SCALE MRNA]</scope>
    <source>
        <strain>C57BL/6J</strain>
        <tissue>Small intestine</tissue>
    </source>
</reference>
<reference key="2">
    <citation type="journal article" date="2009" name="PLoS Biol.">
        <title>Lineage-specific biology revealed by a finished genome assembly of the mouse.</title>
        <authorList>
            <person name="Church D.M."/>
            <person name="Goodstadt L."/>
            <person name="Hillier L.W."/>
            <person name="Zody M.C."/>
            <person name="Goldstein S."/>
            <person name="She X."/>
            <person name="Bult C.J."/>
            <person name="Agarwala R."/>
            <person name="Cherry J.L."/>
            <person name="DiCuccio M."/>
            <person name="Hlavina W."/>
            <person name="Kapustin Y."/>
            <person name="Meric P."/>
            <person name="Maglott D."/>
            <person name="Birtle Z."/>
            <person name="Marques A.C."/>
            <person name="Graves T."/>
            <person name="Zhou S."/>
            <person name="Teague B."/>
            <person name="Potamousis K."/>
            <person name="Churas C."/>
            <person name="Place M."/>
            <person name="Herschleb J."/>
            <person name="Runnheim R."/>
            <person name="Forrest D."/>
            <person name="Amos-Landgraf J."/>
            <person name="Schwartz D.C."/>
            <person name="Cheng Z."/>
            <person name="Lindblad-Toh K."/>
            <person name="Eichler E.E."/>
            <person name="Ponting C.P."/>
        </authorList>
    </citation>
    <scope>NUCLEOTIDE SEQUENCE [LARGE SCALE GENOMIC DNA]</scope>
    <source>
        <strain>C57BL/6J</strain>
    </source>
</reference>
<reference key="3">
    <citation type="submission" date="2005-07" db="EMBL/GenBank/DDBJ databases">
        <authorList>
            <person name="Mural R.J."/>
            <person name="Adams M.D."/>
            <person name="Myers E.W."/>
            <person name="Smith H.O."/>
            <person name="Venter J.C."/>
        </authorList>
    </citation>
    <scope>NUCLEOTIDE SEQUENCE [LARGE SCALE GENOMIC DNA]</scope>
</reference>
<reference key="4">
    <citation type="journal article" date="2004" name="Genome Res.">
        <title>The status, quality, and expansion of the NIH full-length cDNA project: the Mammalian Gene Collection (MGC).</title>
        <authorList>
            <consortium name="The MGC Project Team"/>
        </authorList>
    </citation>
    <scope>NUCLEOTIDE SEQUENCE [LARGE SCALE MRNA]</scope>
    <source>
        <tissue>Brain</tissue>
    </source>
</reference>